<organism>
    <name type="scientific">Escherichia coli O6:K15:H31 (strain 536 / UPEC)</name>
    <dbReference type="NCBI Taxonomy" id="362663"/>
    <lineage>
        <taxon>Bacteria</taxon>
        <taxon>Pseudomonadati</taxon>
        <taxon>Pseudomonadota</taxon>
        <taxon>Gammaproteobacteria</taxon>
        <taxon>Enterobacterales</taxon>
        <taxon>Enterobacteriaceae</taxon>
        <taxon>Escherichia</taxon>
    </lineage>
</organism>
<sequence length="94" mass="10651">MTKSELIERLATQQSHIPAKTVEDAVKEMLEHMASTLAQGERIEIRGFGSFSLHYRAPRTGRNPKTGDKVELEGKYVPHFKPGKELRDRANIYG</sequence>
<dbReference type="EMBL" id="CP000247">
    <property type="protein sequence ID" value="ABG68938.1"/>
    <property type="molecule type" value="Genomic_DNA"/>
</dbReference>
<dbReference type="RefSeq" id="WP_000167336.1">
    <property type="nucleotide sequence ID" value="NC_008253.1"/>
</dbReference>
<dbReference type="SMR" id="Q0TJE1"/>
<dbReference type="GeneID" id="93776505"/>
<dbReference type="KEGG" id="ecp:ECP_0923"/>
<dbReference type="HOGENOM" id="CLU_105066_2_0_6"/>
<dbReference type="Proteomes" id="UP000009182">
    <property type="component" value="Chromosome"/>
</dbReference>
<dbReference type="GO" id="GO:0005694">
    <property type="term" value="C:chromosome"/>
    <property type="evidence" value="ECO:0007669"/>
    <property type="project" value="InterPro"/>
</dbReference>
<dbReference type="GO" id="GO:0005829">
    <property type="term" value="C:cytosol"/>
    <property type="evidence" value="ECO:0007669"/>
    <property type="project" value="TreeGrafter"/>
</dbReference>
<dbReference type="GO" id="GO:0003677">
    <property type="term" value="F:DNA binding"/>
    <property type="evidence" value="ECO:0007669"/>
    <property type="project" value="UniProtKB-UniRule"/>
</dbReference>
<dbReference type="GO" id="GO:0030527">
    <property type="term" value="F:structural constituent of chromatin"/>
    <property type="evidence" value="ECO:0007669"/>
    <property type="project" value="InterPro"/>
</dbReference>
<dbReference type="GO" id="GO:0006310">
    <property type="term" value="P:DNA recombination"/>
    <property type="evidence" value="ECO:0007669"/>
    <property type="project" value="UniProtKB-UniRule"/>
</dbReference>
<dbReference type="GO" id="GO:0006355">
    <property type="term" value="P:regulation of DNA-templated transcription"/>
    <property type="evidence" value="ECO:0007669"/>
    <property type="project" value="UniProtKB-UniRule"/>
</dbReference>
<dbReference type="GO" id="GO:0006417">
    <property type="term" value="P:regulation of translation"/>
    <property type="evidence" value="ECO:0007669"/>
    <property type="project" value="UniProtKB-UniRule"/>
</dbReference>
<dbReference type="CDD" id="cd13836">
    <property type="entry name" value="IHF_B"/>
    <property type="match status" value="1"/>
</dbReference>
<dbReference type="FunFam" id="4.10.520.10:FF:000003">
    <property type="entry name" value="Integration host factor subunit beta"/>
    <property type="match status" value="1"/>
</dbReference>
<dbReference type="Gene3D" id="4.10.520.10">
    <property type="entry name" value="IHF-like DNA-binding proteins"/>
    <property type="match status" value="1"/>
</dbReference>
<dbReference type="HAMAP" id="MF_00381">
    <property type="entry name" value="IHF_beta"/>
    <property type="match status" value="1"/>
</dbReference>
<dbReference type="InterPro" id="IPR000119">
    <property type="entry name" value="Hist_DNA-bd"/>
</dbReference>
<dbReference type="InterPro" id="IPR020816">
    <property type="entry name" value="Histone-like_DNA-bd_CS"/>
</dbReference>
<dbReference type="InterPro" id="IPR010992">
    <property type="entry name" value="IHF-like_DNA-bd_dom_sf"/>
</dbReference>
<dbReference type="InterPro" id="IPR005685">
    <property type="entry name" value="IHF_beta"/>
</dbReference>
<dbReference type="NCBIfam" id="TIGR00988">
    <property type="entry name" value="hip"/>
    <property type="match status" value="1"/>
</dbReference>
<dbReference type="NCBIfam" id="NF001222">
    <property type="entry name" value="PRK00199.1"/>
    <property type="match status" value="1"/>
</dbReference>
<dbReference type="PANTHER" id="PTHR33175">
    <property type="entry name" value="DNA-BINDING PROTEIN HU"/>
    <property type="match status" value="1"/>
</dbReference>
<dbReference type="PANTHER" id="PTHR33175:SF5">
    <property type="entry name" value="INTEGRATION HOST FACTOR SUBUNIT BETA"/>
    <property type="match status" value="1"/>
</dbReference>
<dbReference type="Pfam" id="PF00216">
    <property type="entry name" value="Bac_DNA_binding"/>
    <property type="match status" value="1"/>
</dbReference>
<dbReference type="PRINTS" id="PR01727">
    <property type="entry name" value="DNABINDINGHU"/>
</dbReference>
<dbReference type="SMART" id="SM00411">
    <property type="entry name" value="BHL"/>
    <property type="match status" value="1"/>
</dbReference>
<dbReference type="SUPFAM" id="SSF47729">
    <property type="entry name" value="IHF-like DNA-binding proteins"/>
    <property type="match status" value="1"/>
</dbReference>
<dbReference type="PROSITE" id="PS00045">
    <property type="entry name" value="HISTONE_LIKE"/>
    <property type="match status" value="1"/>
</dbReference>
<protein>
    <recommendedName>
        <fullName evidence="1">Integration host factor subunit beta</fullName>
        <shortName evidence="1">IHF-beta</shortName>
    </recommendedName>
</protein>
<gene>
    <name evidence="1" type="primary">ihfB</name>
    <name evidence="1" type="synonym">himD</name>
    <name type="ordered locus">ECP_0923</name>
</gene>
<accession>Q0TJE1</accession>
<comment type="function">
    <text evidence="1">This protein is one of the two subunits of integration host factor, a specific DNA-binding protein that functions in genetic recombination as well as in transcriptional and translational control.</text>
</comment>
<comment type="subunit">
    <text evidence="1">Heterodimer of an alpha and a beta chain.</text>
</comment>
<comment type="similarity">
    <text evidence="1">Belongs to the bacterial histone-like protein family.</text>
</comment>
<keyword id="KW-0233">DNA recombination</keyword>
<keyword id="KW-0238">DNA-binding</keyword>
<keyword id="KW-0804">Transcription</keyword>
<keyword id="KW-0805">Transcription regulation</keyword>
<keyword id="KW-0810">Translation regulation</keyword>
<evidence type="ECO:0000255" key="1">
    <source>
        <dbReference type="HAMAP-Rule" id="MF_00381"/>
    </source>
</evidence>
<feature type="chain" id="PRO_1000060601" description="Integration host factor subunit beta">
    <location>
        <begin position="1"/>
        <end position="94"/>
    </location>
</feature>
<proteinExistence type="inferred from homology"/>
<reference key="1">
    <citation type="journal article" date="2006" name="Mol. Microbiol.">
        <title>Role of pathogenicity island-associated integrases in the genome plasticity of uropathogenic Escherichia coli strain 536.</title>
        <authorList>
            <person name="Hochhut B."/>
            <person name="Wilde C."/>
            <person name="Balling G."/>
            <person name="Middendorf B."/>
            <person name="Dobrindt U."/>
            <person name="Brzuszkiewicz E."/>
            <person name="Gottschalk G."/>
            <person name="Carniel E."/>
            <person name="Hacker J."/>
        </authorList>
    </citation>
    <scope>NUCLEOTIDE SEQUENCE [LARGE SCALE GENOMIC DNA]</scope>
    <source>
        <strain>536 / UPEC</strain>
    </source>
</reference>
<name>IHFB_ECOL5</name>